<reference key="1">
    <citation type="submission" date="2008-02" db="EMBL/GenBank/DDBJ databases">
        <title>Genome sequence of Ureaplasma parvum serovar 3.</title>
        <authorList>
            <person name="Methe B.A."/>
            <person name="Glass J."/>
            <person name="Waites K."/>
            <person name="Shrivastava S."/>
        </authorList>
    </citation>
    <scope>NUCLEOTIDE SEQUENCE [LARGE SCALE GENOMIC DNA]</scope>
    <source>
        <strain>ATCC 27815 / 27 / NCTC 11736</strain>
    </source>
</reference>
<organism>
    <name type="scientific">Ureaplasma parvum serovar 3 (strain ATCC 27815 / 27 / NCTC 11736)</name>
    <dbReference type="NCBI Taxonomy" id="505682"/>
    <lineage>
        <taxon>Bacteria</taxon>
        <taxon>Bacillati</taxon>
        <taxon>Mycoplasmatota</taxon>
        <taxon>Mycoplasmoidales</taxon>
        <taxon>Mycoplasmoidaceae</taxon>
        <taxon>Ureaplasma</taxon>
    </lineage>
</organism>
<protein>
    <recommendedName>
        <fullName evidence="1">Nucleoid-associated protein UPA3_0088</fullName>
    </recommendedName>
</protein>
<dbReference type="EMBL" id="CP000942">
    <property type="protein sequence ID" value="ACA33208.1"/>
    <property type="molecule type" value="Genomic_DNA"/>
</dbReference>
<dbReference type="RefSeq" id="WP_006689002.1">
    <property type="nucleotide sequence ID" value="NC_010503.1"/>
</dbReference>
<dbReference type="SMR" id="B1AI74"/>
<dbReference type="GeneID" id="29672728"/>
<dbReference type="KEGG" id="upa:UPA3_0088"/>
<dbReference type="HOGENOM" id="CLU_140930_1_2_14"/>
<dbReference type="Proteomes" id="UP000002162">
    <property type="component" value="Chromosome"/>
</dbReference>
<dbReference type="GO" id="GO:0043590">
    <property type="term" value="C:bacterial nucleoid"/>
    <property type="evidence" value="ECO:0007669"/>
    <property type="project" value="UniProtKB-UniRule"/>
</dbReference>
<dbReference type="GO" id="GO:0005737">
    <property type="term" value="C:cytoplasm"/>
    <property type="evidence" value="ECO:0007669"/>
    <property type="project" value="UniProtKB-UniRule"/>
</dbReference>
<dbReference type="GO" id="GO:0003677">
    <property type="term" value="F:DNA binding"/>
    <property type="evidence" value="ECO:0007669"/>
    <property type="project" value="UniProtKB-UniRule"/>
</dbReference>
<dbReference type="Gene3D" id="3.30.1310.10">
    <property type="entry name" value="Nucleoid-associated protein YbaB-like domain"/>
    <property type="match status" value="1"/>
</dbReference>
<dbReference type="HAMAP" id="MF_00274">
    <property type="entry name" value="DNA_YbaB_EbfC"/>
    <property type="match status" value="1"/>
</dbReference>
<dbReference type="InterPro" id="IPR036894">
    <property type="entry name" value="YbaB-like_sf"/>
</dbReference>
<dbReference type="InterPro" id="IPR004401">
    <property type="entry name" value="YbaB/EbfC"/>
</dbReference>
<dbReference type="NCBIfam" id="TIGR00103">
    <property type="entry name" value="DNA_YbaB_EbfC"/>
    <property type="match status" value="1"/>
</dbReference>
<dbReference type="Pfam" id="PF02575">
    <property type="entry name" value="YbaB_DNA_bd"/>
    <property type="match status" value="1"/>
</dbReference>
<dbReference type="PIRSF" id="PIRSF004555">
    <property type="entry name" value="UCP004555"/>
    <property type="match status" value="1"/>
</dbReference>
<dbReference type="SUPFAM" id="SSF82607">
    <property type="entry name" value="YbaB-like"/>
    <property type="match status" value="1"/>
</dbReference>
<evidence type="ECO:0000255" key="1">
    <source>
        <dbReference type="HAMAP-Rule" id="MF_00274"/>
    </source>
</evidence>
<comment type="function">
    <text evidence="1">Binds to DNA and alters its conformation. May be involved in regulation of gene expression, nucleoid organization and DNA protection.</text>
</comment>
<comment type="subunit">
    <text evidence="1">Homodimer.</text>
</comment>
<comment type="subcellular location">
    <subcellularLocation>
        <location evidence="1">Cytoplasm</location>
        <location evidence="1">Nucleoid</location>
    </subcellularLocation>
</comment>
<comment type="similarity">
    <text evidence="1">Belongs to the YbaB/EbfC family.</text>
</comment>
<gene>
    <name type="ordered locus">UPA3_0088</name>
</gene>
<proteinExistence type="inferred from homology"/>
<accession>B1AI74</accession>
<name>Y088_UREP2</name>
<sequence>MDFQKLAQELKKMQNTLSKKQKEFEEKVFDFDYKGYVLVKIKGDLNIEAIEIKTEIVDPEDKETLQDILRAAINEAISITCKERDAIMNATIPKGTGLF</sequence>
<feature type="chain" id="PRO_1000078778" description="Nucleoid-associated protein UPA3_0088">
    <location>
        <begin position="1"/>
        <end position="99"/>
    </location>
</feature>
<keyword id="KW-0963">Cytoplasm</keyword>
<keyword id="KW-0238">DNA-binding</keyword>